<protein>
    <recommendedName>
        <fullName evidence="1">Large ribosomal subunit protein bL31</fullName>
    </recommendedName>
    <alternativeName>
        <fullName evidence="2">50S ribosomal protein L31</fullName>
    </alternativeName>
</protein>
<organism>
    <name type="scientific">Histophilus somni (strain 2336)</name>
    <name type="common">Haemophilus somnus</name>
    <dbReference type="NCBI Taxonomy" id="228400"/>
    <lineage>
        <taxon>Bacteria</taxon>
        <taxon>Pseudomonadati</taxon>
        <taxon>Pseudomonadota</taxon>
        <taxon>Gammaproteobacteria</taxon>
        <taxon>Pasteurellales</taxon>
        <taxon>Pasteurellaceae</taxon>
        <taxon>Histophilus</taxon>
    </lineage>
</organism>
<sequence>MKQGIHPEYKEITATCSCGNVIKTRSTVGKNLNLDVCSNCHPFYTGKQRVVDTGGRVERFNKRFSIPSSK</sequence>
<gene>
    <name evidence="1" type="primary">rpmE</name>
    <name type="ordered locus">HSM_0533</name>
</gene>
<keyword id="KW-0479">Metal-binding</keyword>
<keyword id="KW-0687">Ribonucleoprotein</keyword>
<keyword id="KW-0689">Ribosomal protein</keyword>
<keyword id="KW-0694">RNA-binding</keyword>
<keyword id="KW-0699">rRNA-binding</keyword>
<keyword id="KW-0862">Zinc</keyword>
<proteinExistence type="inferred from homology"/>
<comment type="function">
    <text evidence="1">Binds the 23S rRNA.</text>
</comment>
<comment type="cofactor">
    <cofactor evidence="1">
        <name>Zn(2+)</name>
        <dbReference type="ChEBI" id="CHEBI:29105"/>
    </cofactor>
    <text evidence="1">Binds 1 zinc ion per subunit.</text>
</comment>
<comment type="subunit">
    <text evidence="1">Part of the 50S ribosomal subunit.</text>
</comment>
<comment type="similarity">
    <text evidence="1">Belongs to the bacterial ribosomal protein bL31 family. Type A subfamily.</text>
</comment>
<dbReference type="EMBL" id="CP000947">
    <property type="protein sequence ID" value="ACA32184.1"/>
    <property type="molecule type" value="Genomic_DNA"/>
</dbReference>
<dbReference type="RefSeq" id="WP_012341368.1">
    <property type="nucleotide sequence ID" value="NC_010519.1"/>
</dbReference>
<dbReference type="SMR" id="B0URX8"/>
<dbReference type="STRING" id="228400.HSM_0533"/>
<dbReference type="GeneID" id="31486808"/>
<dbReference type="KEGG" id="hsm:HSM_0533"/>
<dbReference type="HOGENOM" id="CLU_114306_4_3_6"/>
<dbReference type="GO" id="GO:1990904">
    <property type="term" value="C:ribonucleoprotein complex"/>
    <property type="evidence" value="ECO:0007669"/>
    <property type="project" value="UniProtKB-KW"/>
</dbReference>
<dbReference type="GO" id="GO:0005840">
    <property type="term" value="C:ribosome"/>
    <property type="evidence" value="ECO:0007669"/>
    <property type="project" value="UniProtKB-KW"/>
</dbReference>
<dbReference type="GO" id="GO:0046872">
    <property type="term" value="F:metal ion binding"/>
    <property type="evidence" value="ECO:0007669"/>
    <property type="project" value="UniProtKB-KW"/>
</dbReference>
<dbReference type="GO" id="GO:0019843">
    <property type="term" value="F:rRNA binding"/>
    <property type="evidence" value="ECO:0007669"/>
    <property type="project" value="UniProtKB-KW"/>
</dbReference>
<dbReference type="GO" id="GO:0003735">
    <property type="term" value="F:structural constituent of ribosome"/>
    <property type="evidence" value="ECO:0007669"/>
    <property type="project" value="InterPro"/>
</dbReference>
<dbReference type="GO" id="GO:0006412">
    <property type="term" value="P:translation"/>
    <property type="evidence" value="ECO:0007669"/>
    <property type="project" value="UniProtKB-UniRule"/>
</dbReference>
<dbReference type="FunFam" id="4.10.830.30:FF:000001">
    <property type="entry name" value="50S ribosomal protein L31"/>
    <property type="match status" value="1"/>
</dbReference>
<dbReference type="Gene3D" id="4.10.830.30">
    <property type="entry name" value="Ribosomal protein L31"/>
    <property type="match status" value="1"/>
</dbReference>
<dbReference type="HAMAP" id="MF_00501">
    <property type="entry name" value="Ribosomal_bL31_1"/>
    <property type="match status" value="1"/>
</dbReference>
<dbReference type="InterPro" id="IPR034704">
    <property type="entry name" value="Ribosomal_bL28/bL31-like_sf"/>
</dbReference>
<dbReference type="InterPro" id="IPR002150">
    <property type="entry name" value="Ribosomal_bL31"/>
</dbReference>
<dbReference type="InterPro" id="IPR027491">
    <property type="entry name" value="Ribosomal_bL31_A"/>
</dbReference>
<dbReference type="InterPro" id="IPR042105">
    <property type="entry name" value="Ribosomal_bL31_sf"/>
</dbReference>
<dbReference type="NCBIfam" id="TIGR00105">
    <property type="entry name" value="L31"/>
    <property type="match status" value="1"/>
</dbReference>
<dbReference type="NCBIfam" id="NF000612">
    <property type="entry name" value="PRK00019.1"/>
    <property type="match status" value="1"/>
</dbReference>
<dbReference type="NCBIfam" id="NF001809">
    <property type="entry name" value="PRK00528.1"/>
    <property type="match status" value="1"/>
</dbReference>
<dbReference type="PANTHER" id="PTHR33280">
    <property type="entry name" value="50S RIBOSOMAL PROTEIN L31, CHLOROPLASTIC"/>
    <property type="match status" value="1"/>
</dbReference>
<dbReference type="PANTHER" id="PTHR33280:SF6">
    <property type="entry name" value="LARGE RIBOSOMAL SUBUNIT PROTEIN BL31A"/>
    <property type="match status" value="1"/>
</dbReference>
<dbReference type="Pfam" id="PF01197">
    <property type="entry name" value="Ribosomal_L31"/>
    <property type="match status" value="1"/>
</dbReference>
<dbReference type="PRINTS" id="PR01249">
    <property type="entry name" value="RIBOSOMALL31"/>
</dbReference>
<dbReference type="SUPFAM" id="SSF143800">
    <property type="entry name" value="L28p-like"/>
    <property type="match status" value="1"/>
</dbReference>
<dbReference type="PROSITE" id="PS01143">
    <property type="entry name" value="RIBOSOMAL_L31"/>
    <property type="match status" value="1"/>
</dbReference>
<name>RL31_HISS2</name>
<feature type="chain" id="PRO_1000126641" description="Large ribosomal subunit protein bL31">
    <location>
        <begin position="1"/>
        <end position="70"/>
    </location>
</feature>
<feature type="binding site" evidence="1">
    <location>
        <position position="16"/>
    </location>
    <ligand>
        <name>Zn(2+)</name>
        <dbReference type="ChEBI" id="CHEBI:29105"/>
    </ligand>
</feature>
<feature type="binding site" evidence="1">
    <location>
        <position position="18"/>
    </location>
    <ligand>
        <name>Zn(2+)</name>
        <dbReference type="ChEBI" id="CHEBI:29105"/>
    </ligand>
</feature>
<feature type="binding site" evidence="1">
    <location>
        <position position="37"/>
    </location>
    <ligand>
        <name>Zn(2+)</name>
        <dbReference type="ChEBI" id="CHEBI:29105"/>
    </ligand>
</feature>
<feature type="binding site" evidence="1">
    <location>
        <position position="40"/>
    </location>
    <ligand>
        <name>Zn(2+)</name>
        <dbReference type="ChEBI" id="CHEBI:29105"/>
    </ligand>
</feature>
<reference key="1">
    <citation type="submission" date="2008-02" db="EMBL/GenBank/DDBJ databases">
        <title>Complete sequence of Haemophilus somnus 2336.</title>
        <authorList>
            <consortium name="US DOE Joint Genome Institute"/>
            <person name="Siddaramappa S."/>
            <person name="Duncan A.J."/>
            <person name="Challacombe J.F."/>
            <person name="Rainey D."/>
            <person name="Gillaspy A.F."/>
            <person name="Carson M."/>
            <person name="Gipson J."/>
            <person name="Gipson M."/>
            <person name="Bruce D."/>
            <person name="Detter J.C."/>
            <person name="Han C.S."/>
            <person name="Land M."/>
            <person name="Tapia R."/>
            <person name="Thompson L.S."/>
            <person name="Orvis J."/>
            <person name="Zaitshik J."/>
            <person name="Barnes G."/>
            <person name="Brettin T.S."/>
            <person name="Dyer D.W."/>
            <person name="Inzana T.J."/>
        </authorList>
    </citation>
    <scope>NUCLEOTIDE SEQUENCE [LARGE SCALE GENOMIC DNA]</scope>
    <source>
        <strain>2336</strain>
    </source>
</reference>
<accession>B0URX8</accession>
<evidence type="ECO:0000255" key="1">
    <source>
        <dbReference type="HAMAP-Rule" id="MF_00501"/>
    </source>
</evidence>
<evidence type="ECO:0000305" key="2"/>